<evidence type="ECO:0000250" key="1"/>
<evidence type="ECO:0000250" key="2">
    <source>
        <dbReference type="UniProtKB" id="Q9Y3C5"/>
    </source>
</evidence>
<evidence type="ECO:0000255" key="3">
    <source>
        <dbReference type="PROSITE-ProRule" id="PRU00175"/>
    </source>
</evidence>
<evidence type="ECO:0000256" key="4">
    <source>
        <dbReference type="SAM" id="MobiDB-lite"/>
    </source>
</evidence>
<evidence type="ECO:0000269" key="5">
    <source>
    </source>
</evidence>
<evidence type="ECO:0000305" key="6"/>
<evidence type="ECO:0007744" key="7">
    <source>
    </source>
</evidence>
<dbReference type="EMBL" id="AB024427">
    <property type="protein sequence ID" value="BAA84682.1"/>
    <property type="molecule type" value="mRNA"/>
</dbReference>
<dbReference type="EMBL" id="AF220206">
    <property type="protein sequence ID" value="AAG44245.1"/>
    <property type="status" value="ALT_INIT"/>
    <property type="molecule type" value="mRNA"/>
</dbReference>
<dbReference type="EMBL" id="AL669905">
    <property type="status" value="NOT_ANNOTATED_CDS"/>
    <property type="molecule type" value="Genomic_DNA"/>
</dbReference>
<dbReference type="EMBL" id="CH466527">
    <property type="protein sequence ID" value="EDL30703.1"/>
    <property type="molecule type" value="Genomic_DNA"/>
</dbReference>
<dbReference type="EMBL" id="CH466527">
    <property type="protein sequence ID" value="EDL30704.1"/>
    <property type="molecule type" value="Genomic_DNA"/>
</dbReference>
<dbReference type="EMBL" id="CH466527">
    <property type="protein sequence ID" value="EDL30705.1"/>
    <property type="molecule type" value="Genomic_DNA"/>
</dbReference>
<dbReference type="EMBL" id="BC010299">
    <property type="protein sequence ID" value="AAH10299.1"/>
    <property type="molecule type" value="mRNA"/>
</dbReference>
<dbReference type="EMBL" id="BC028255">
    <property type="protein sequence ID" value="AAH28255.1"/>
    <property type="molecule type" value="mRNA"/>
</dbReference>
<dbReference type="CCDS" id="CCDS18464.1"/>
<dbReference type="RefSeq" id="NP_001418194.1">
    <property type="nucleotide sequence ID" value="NM_001431265.1"/>
</dbReference>
<dbReference type="RefSeq" id="NP_038904.1">
    <property type="nucleotide sequence ID" value="NM_013876.4"/>
</dbReference>
<dbReference type="SMR" id="Q9QYK7"/>
<dbReference type="BioGRID" id="205930">
    <property type="interactions" value="9"/>
</dbReference>
<dbReference type="CORUM" id="Q9QYK7"/>
<dbReference type="FunCoup" id="Q9QYK7">
    <property type="interactions" value="439"/>
</dbReference>
<dbReference type="IntAct" id="Q9QYK7">
    <property type="interactions" value="8"/>
</dbReference>
<dbReference type="MINT" id="Q9QYK7"/>
<dbReference type="STRING" id="10090.ENSMUSP00000030284"/>
<dbReference type="iPTMnet" id="Q9QYK7"/>
<dbReference type="PhosphoSitePlus" id="Q9QYK7"/>
<dbReference type="SwissPalm" id="Q9QYK7"/>
<dbReference type="jPOST" id="Q9QYK7"/>
<dbReference type="PaxDb" id="10090-ENSMUSP00000030284"/>
<dbReference type="PeptideAtlas" id="Q9QYK7"/>
<dbReference type="ProteomicsDB" id="300456"/>
<dbReference type="Pumba" id="Q9QYK7"/>
<dbReference type="Antibodypedia" id="32937">
    <property type="antibodies" value="179 antibodies from 24 providers"/>
</dbReference>
<dbReference type="DNASU" id="29864"/>
<dbReference type="Ensembl" id="ENSMUST00000030284.10">
    <property type="protein sequence ID" value="ENSMUSP00000030284.4"/>
    <property type="gene ID" value="ENSMUSG00000028557.11"/>
</dbReference>
<dbReference type="Ensembl" id="ENSMUST00000064167.8">
    <property type="protein sequence ID" value="ENSMUSP00000063798.2"/>
    <property type="gene ID" value="ENSMUSG00000028557.11"/>
</dbReference>
<dbReference type="GeneID" id="29864"/>
<dbReference type="KEGG" id="mmu:29864"/>
<dbReference type="UCSC" id="uc008ucm.1">
    <property type="organism name" value="mouse"/>
</dbReference>
<dbReference type="AGR" id="MGI:1352759"/>
<dbReference type="CTD" id="26994"/>
<dbReference type="MGI" id="MGI:1352759">
    <property type="gene designation" value="Rnf11"/>
</dbReference>
<dbReference type="VEuPathDB" id="HostDB:ENSMUSG00000028557"/>
<dbReference type="eggNOG" id="KOG0800">
    <property type="taxonomic scope" value="Eukaryota"/>
</dbReference>
<dbReference type="GeneTree" id="ENSGT00730000110988"/>
<dbReference type="HOGENOM" id="CLU_123539_1_0_1"/>
<dbReference type="InParanoid" id="Q9QYK7"/>
<dbReference type="OMA" id="HLDCIDN"/>
<dbReference type="OrthoDB" id="9984778at2759"/>
<dbReference type="PhylomeDB" id="Q9QYK7"/>
<dbReference type="TreeFam" id="TF318022"/>
<dbReference type="BioGRID-ORCS" id="29864">
    <property type="hits" value="2 hits in 77 CRISPR screens"/>
</dbReference>
<dbReference type="CD-CODE" id="CE726F99">
    <property type="entry name" value="Postsynaptic density"/>
</dbReference>
<dbReference type="ChiTaRS" id="Rnf11">
    <property type="organism name" value="mouse"/>
</dbReference>
<dbReference type="PRO" id="PR:Q9QYK7"/>
<dbReference type="Proteomes" id="UP000000589">
    <property type="component" value="Chromosome 4"/>
</dbReference>
<dbReference type="RNAct" id="Q9QYK7">
    <property type="molecule type" value="protein"/>
</dbReference>
<dbReference type="Bgee" id="ENSMUSG00000028557">
    <property type="expression patterns" value="Expressed in blood and 269 other cell types or tissues"/>
</dbReference>
<dbReference type="ExpressionAtlas" id="Q9QYK7">
    <property type="expression patterns" value="baseline and differential"/>
</dbReference>
<dbReference type="GO" id="GO:0005769">
    <property type="term" value="C:early endosome"/>
    <property type="evidence" value="ECO:0007669"/>
    <property type="project" value="UniProtKB-SubCell"/>
</dbReference>
<dbReference type="GO" id="GO:0005634">
    <property type="term" value="C:nucleus"/>
    <property type="evidence" value="ECO:0007669"/>
    <property type="project" value="UniProtKB-SubCell"/>
</dbReference>
<dbReference type="GO" id="GO:0055037">
    <property type="term" value="C:recycling endosome"/>
    <property type="evidence" value="ECO:0007669"/>
    <property type="project" value="UniProtKB-SubCell"/>
</dbReference>
<dbReference type="GO" id="GO:0000151">
    <property type="term" value="C:ubiquitin ligase complex"/>
    <property type="evidence" value="ECO:0000353"/>
    <property type="project" value="MGI"/>
</dbReference>
<dbReference type="GO" id="GO:0061630">
    <property type="term" value="F:ubiquitin protein ligase activity"/>
    <property type="evidence" value="ECO:0007669"/>
    <property type="project" value="Ensembl"/>
</dbReference>
<dbReference type="GO" id="GO:0008270">
    <property type="term" value="F:zinc ion binding"/>
    <property type="evidence" value="ECO:0007669"/>
    <property type="project" value="UniProtKB-KW"/>
</dbReference>
<dbReference type="GO" id="GO:0051865">
    <property type="term" value="P:protein autoubiquitination"/>
    <property type="evidence" value="ECO:0007669"/>
    <property type="project" value="Ensembl"/>
</dbReference>
<dbReference type="GO" id="GO:0006511">
    <property type="term" value="P:ubiquitin-dependent protein catabolic process"/>
    <property type="evidence" value="ECO:0000353"/>
    <property type="project" value="MGI"/>
</dbReference>
<dbReference type="CDD" id="cd16468">
    <property type="entry name" value="RING-H2_RNF11"/>
    <property type="match status" value="1"/>
</dbReference>
<dbReference type="FunFam" id="3.30.40.10:FF:000134">
    <property type="entry name" value="Ring finger protein 11"/>
    <property type="match status" value="1"/>
</dbReference>
<dbReference type="Gene3D" id="3.30.40.10">
    <property type="entry name" value="Zinc/RING finger domain, C3HC4 (zinc finger)"/>
    <property type="match status" value="1"/>
</dbReference>
<dbReference type="InterPro" id="IPR042981">
    <property type="entry name" value="RNF11_RING-H2"/>
</dbReference>
<dbReference type="InterPro" id="IPR052804">
    <property type="entry name" value="UEC_component"/>
</dbReference>
<dbReference type="InterPro" id="IPR001841">
    <property type="entry name" value="Znf_RING"/>
</dbReference>
<dbReference type="InterPro" id="IPR013083">
    <property type="entry name" value="Znf_RING/FYVE/PHD"/>
</dbReference>
<dbReference type="PANTHER" id="PTHR46359">
    <property type="entry name" value="GEO07743P1"/>
    <property type="match status" value="1"/>
</dbReference>
<dbReference type="PANTHER" id="PTHR46359:SF1">
    <property type="entry name" value="RING FINGER PROTEIN 11"/>
    <property type="match status" value="1"/>
</dbReference>
<dbReference type="Pfam" id="PF13639">
    <property type="entry name" value="zf-RING_2"/>
    <property type="match status" value="1"/>
</dbReference>
<dbReference type="SMART" id="SM00184">
    <property type="entry name" value="RING"/>
    <property type="match status" value="1"/>
</dbReference>
<dbReference type="SUPFAM" id="SSF57850">
    <property type="entry name" value="RING/U-box"/>
    <property type="match status" value="1"/>
</dbReference>
<dbReference type="PROSITE" id="PS50089">
    <property type="entry name" value="ZF_RING_2"/>
    <property type="match status" value="1"/>
</dbReference>
<organism>
    <name type="scientific">Mus musculus</name>
    <name type="common">Mouse</name>
    <dbReference type="NCBI Taxonomy" id="10090"/>
    <lineage>
        <taxon>Eukaryota</taxon>
        <taxon>Metazoa</taxon>
        <taxon>Chordata</taxon>
        <taxon>Craniata</taxon>
        <taxon>Vertebrata</taxon>
        <taxon>Euteleostomi</taxon>
        <taxon>Mammalia</taxon>
        <taxon>Eutheria</taxon>
        <taxon>Euarchontoglires</taxon>
        <taxon>Glires</taxon>
        <taxon>Rodentia</taxon>
        <taxon>Myomorpha</taxon>
        <taxon>Muroidea</taxon>
        <taxon>Muridae</taxon>
        <taxon>Murinae</taxon>
        <taxon>Mus</taxon>
        <taxon>Mus</taxon>
    </lineage>
</organism>
<proteinExistence type="evidence at protein level"/>
<name>RNF11_MOUSE</name>
<reference key="1">
    <citation type="journal article" date="1999" name="Biochim. Biophys. Acta">
        <title>Cloning and expression profile of mouse and human genes, Rnf11/RNF11, encoding a novel RING-H2 finger protein.</title>
        <authorList>
            <person name="Seki N."/>
            <person name="Hattori A."/>
            <person name="Hayashi A."/>
            <person name="Kozuma S."/>
            <person name="Sasaki M."/>
            <person name="Suzuki Y."/>
            <person name="Sugano S."/>
            <person name="Muramatsu M."/>
            <person name="Saito T."/>
        </authorList>
    </citation>
    <scope>NUCLEOTIDE SEQUENCE [MRNA]</scope>
</reference>
<reference key="2">
    <citation type="journal article" date="2000" name="Biochem. J.">
        <title>Identification of multiple proteins expressed in murine embryos as binding partners for the WW domains of the ubiquitin-protein ligase Nedd4.</title>
        <authorList>
            <person name="Jolliffe C.N."/>
            <person name="Harvey K.F."/>
            <person name="Haines B.P."/>
            <person name="Parasivam G."/>
            <person name="Kumar S."/>
        </authorList>
    </citation>
    <scope>NUCLEOTIDE SEQUENCE [MRNA]</scope>
    <scope>DOMAIN</scope>
    <scope>INTERACTION WITH NEDD4</scope>
    <scope>MUTAGENESIS OF TYR-40</scope>
</reference>
<reference key="3">
    <citation type="journal article" date="2009" name="PLoS Biol.">
        <title>Lineage-specific biology revealed by a finished genome assembly of the mouse.</title>
        <authorList>
            <person name="Church D.M."/>
            <person name="Goodstadt L."/>
            <person name="Hillier L.W."/>
            <person name="Zody M.C."/>
            <person name="Goldstein S."/>
            <person name="She X."/>
            <person name="Bult C.J."/>
            <person name="Agarwala R."/>
            <person name="Cherry J.L."/>
            <person name="DiCuccio M."/>
            <person name="Hlavina W."/>
            <person name="Kapustin Y."/>
            <person name="Meric P."/>
            <person name="Maglott D."/>
            <person name="Birtle Z."/>
            <person name="Marques A.C."/>
            <person name="Graves T."/>
            <person name="Zhou S."/>
            <person name="Teague B."/>
            <person name="Potamousis K."/>
            <person name="Churas C."/>
            <person name="Place M."/>
            <person name="Herschleb J."/>
            <person name="Runnheim R."/>
            <person name="Forrest D."/>
            <person name="Amos-Landgraf J."/>
            <person name="Schwartz D.C."/>
            <person name="Cheng Z."/>
            <person name="Lindblad-Toh K."/>
            <person name="Eichler E.E."/>
            <person name="Ponting C.P."/>
        </authorList>
    </citation>
    <scope>NUCLEOTIDE SEQUENCE [LARGE SCALE GENOMIC DNA]</scope>
    <source>
        <strain>C57BL/6J</strain>
    </source>
</reference>
<reference key="4">
    <citation type="submission" date="2005-09" db="EMBL/GenBank/DDBJ databases">
        <authorList>
            <person name="Mural R.J."/>
            <person name="Adams M.D."/>
            <person name="Myers E.W."/>
            <person name="Smith H.O."/>
            <person name="Venter J.C."/>
        </authorList>
    </citation>
    <scope>NUCLEOTIDE SEQUENCE [LARGE SCALE GENOMIC DNA]</scope>
</reference>
<reference key="5">
    <citation type="journal article" date="2004" name="Genome Res.">
        <title>The status, quality, and expansion of the NIH full-length cDNA project: the Mammalian Gene Collection (MGC).</title>
        <authorList>
            <consortium name="The MGC Project Team"/>
        </authorList>
    </citation>
    <scope>NUCLEOTIDE SEQUENCE [LARGE SCALE MRNA]</scope>
    <source>
        <strain>FVB/N</strain>
        <tissue>Kidney</tissue>
    </source>
</reference>
<reference key="6">
    <citation type="journal article" date="2009" name="EMBO J.">
        <title>The ubiquitin-editing enzyme A20 requires RNF11 to downregulate NF-kappaB signalling.</title>
        <authorList>
            <person name="Shembade N."/>
            <person name="Parvatiyar K."/>
            <person name="Harhaj N.S."/>
            <person name="Harhaj E.W."/>
        </authorList>
    </citation>
    <scope>INTERACTION WITH TAX1BP1; TNFAIP3 AND RIPK1</scope>
</reference>
<reference key="7">
    <citation type="journal article" date="2009" name="Immunity">
        <title>The phagosomal proteome in interferon-gamma-activated macrophages.</title>
        <authorList>
            <person name="Trost M."/>
            <person name="English L."/>
            <person name="Lemieux S."/>
            <person name="Courcelles M."/>
            <person name="Desjardins M."/>
            <person name="Thibault P."/>
        </authorList>
    </citation>
    <scope>IDENTIFICATION BY MASS SPECTROMETRY [LARGE SCALE ANALYSIS]</scope>
</reference>
<reference key="8">
    <citation type="journal article" date="2010" name="Cell">
        <title>A tissue-specific atlas of mouse protein phosphorylation and expression.</title>
        <authorList>
            <person name="Huttlin E.L."/>
            <person name="Jedrychowski M.P."/>
            <person name="Elias J.E."/>
            <person name="Goswami T."/>
            <person name="Rad R."/>
            <person name="Beausoleil S.A."/>
            <person name="Villen J."/>
            <person name="Haas W."/>
            <person name="Sowa M.E."/>
            <person name="Gygi S.P."/>
        </authorList>
    </citation>
    <scope>PHOSPHORYLATION [LARGE SCALE ANALYSIS] AT SER-14 AND SER-25</scope>
    <scope>IDENTIFICATION BY MASS SPECTROMETRY [LARGE SCALE ANALYSIS]</scope>
    <source>
        <tissue>Brain</tissue>
        <tissue>Kidney</tissue>
        <tissue>Liver</tissue>
        <tissue>Spleen</tissue>
        <tissue>Testis</tissue>
    </source>
</reference>
<comment type="function">
    <text>Essential component of a ubiquitin-editing protein complex, comprising also TNFAIP3, ITCH and TAX1BP1, that ensures the transient nature of inflammatory signaling pathways. Promotes the association of TNFAIP3 to RIPK1 after TNF stimulation. TNFAIP3 deubiquitinates 'Lys-63' polyubiquitin chains on RIPK1 and catalyzes the formation of 'Lys-48'-polyubiquitin chains. This leads to RIPK1 proteasomal degradation and consequently termination of the TNF- or LPS-mediated activation of NF-kappa-B. Recruits STAMBP to the E3 ubiquitin-ligase SMURF2 for ubiquitination, leading to its degradation by the 26S proteasome.</text>
</comment>
<comment type="subunit">
    <text evidence="1">Interacts (when phosphorylated) with 14-3-3. Interacts with the E3 ubiquitin-ligases NEDD4, ITCH, SMURF2 and WWP1 (By similarity). Also interacts with the E2 ubiquitin-conjugating enzymes UBE2D1 and UBE2N, but neither with CDC34, nor with UBE2L3. Interacts with ZNF350, EPS15 and STAMBP (By similarity). After TNF stimulation, interacts with TAX1BP1, TNFAIP3 and RIPK1; these interactions are transient and they are lost after 1 hour of stimulation with TNF. Interacts with GGA1 (By similarity).</text>
</comment>
<comment type="interaction">
    <interactant intactId="EBI-4405826">
        <id>Q9QYK7</id>
    </interactant>
    <interactant intactId="EBI-773516">
        <id>P46935</id>
        <label>Nedd4</label>
    </interactant>
    <organismsDiffer>false</organismsDiffer>
    <experiments>4</experiments>
</comment>
<comment type="subcellular location">
    <subcellularLocation>
        <location evidence="1">Early endosome</location>
    </subcellularLocation>
    <subcellularLocation>
        <location evidence="1">Recycling endosome</location>
    </subcellularLocation>
    <subcellularLocation>
        <location evidence="1">Cytoplasm</location>
    </subcellularLocation>
    <subcellularLocation>
        <location evidence="1">Nucleus</location>
    </subcellularLocation>
    <text evidence="1">Predominantly cytoplasmic, when unphosphorylated, and nuclear, when phosphorylated by PKB/AKT1.</text>
</comment>
<comment type="domain">
    <text evidence="5">The PPxY motif mediates interaction with NEDD4.</text>
</comment>
<comment type="PTM">
    <text evidence="1">Ubiquitinated in the presence of ITCH, SMURF2 and UBE2D1, as well as WWP1.</text>
</comment>
<comment type="PTM">
    <text evidence="1">Phosphorylation by PKB/AKT1 may accelerate degradation by the proteasome.</text>
</comment>
<comment type="PTM">
    <text evidence="1">Acylation at both Gly-2 and Cys-4 is required for proper localization to the endosomes.</text>
</comment>
<comment type="sequence caution" evidence="6">
    <conflict type="erroneous initiation">
        <sequence resource="EMBL-CDS" id="AAG44245"/>
    </conflict>
</comment>
<feature type="initiator methionine" description="Removed" evidence="2">
    <location>
        <position position="1"/>
    </location>
</feature>
<feature type="chain" id="PRO_0000056051" description="RING finger protein 11">
    <location>
        <begin position="2"/>
        <end position="154"/>
    </location>
</feature>
<feature type="zinc finger region" description="RING-type" evidence="3">
    <location>
        <begin position="99"/>
        <end position="140"/>
    </location>
</feature>
<feature type="region of interest" description="Disordered" evidence="4">
    <location>
        <begin position="1"/>
        <end position="52"/>
    </location>
</feature>
<feature type="short sequence motif" description="PPxY motif">
    <location>
        <begin position="37"/>
        <end position="40"/>
    </location>
</feature>
<feature type="compositionally biased region" description="Polar residues" evidence="4">
    <location>
        <begin position="1"/>
        <end position="12"/>
    </location>
</feature>
<feature type="modified residue" description="Phosphoserine" evidence="7">
    <location>
        <position position="14"/>
    </location>
</feature>
<feature type="modified residue" description="Phosphoserine" evidence="7">
    <location>
        <position position="25"/>
    </location>
</feature>
<feature type="modified residue" description="Phosphothreonine; by PKB/AKT1" evidence="2">
    <location>
        <position position="135"/>
    </location>
</feature>
<feature type="lipid moiety-binding region" description="N-myristoyl glycine" evidence="1">
    <location>
        <position position="2"/>
    </location>
</feature>
<feature type="lipid moiety-binding region" description="S-palmitoyl cysteine" evidence="1">
    <location>
        <position position="4"/>
    </location>
</feature>
<feature type="mutagenesis site" description="Abolishes interaction with NEDD4." evidence="5">
    <original>Y</original>
    <variation>A</variation>
    <location>
        <position position="40"/>
    </location>
</feature>
<gene>
    <name type="primary">Rnf11</name>
    <name type="synonym">N4wbp2</name>
    <name type="synonym">Sid1669</name>
</gene>
<keyword id="KW-0963">Cytoplasm</keyword>
<keyword id="KW-0967">Endosome</keyword>
<keyword id="KW-0449">Lipoprotein</keyword>
<keyword id="KW-0479">Metal-binding</keyword>
<keyword id="KW-0519">Myristate</keyword>
<keyword id="KW-0539">Nucleus</keyword>
<keyword id="KW-0564">Palmitate</keyword>
<keyword id="KW-0597">Phosphoprotein</keyword>
<keyword id="KW-1185">Reference proteome</keyword>
<keyword id="KW-0832">Ubl conjugation</keyword>
<keyword id="KW-0833">Ubl conjugation pathway</keyword>
<keyword id="KW-0862">Zinc</keyword>
<keyword id="KW-0863">Zinc-finger</keyword>
<protein>
    <recommendedName>
        <fullName>RING finger protein 11</fullName>
    </recommendedName>
    <alternativeName>
        <fullName>NEDD4 WW domain-binding protein 2</fullName>
    </alternativeName>
    <alternativeName>
        <fullName>Sid 1669</fullName>
    </alternativeName>
</protein>
<sequence>MGNCLKSPTSDDISLLHESQSDRASFGEGTEPDQEPPPPYQEQVPVPIYHPTPSQTRLATQLTEEEQIRIAQRIGLIQHLPKGVYDPGRDGSEKKIRECVICMMDFVYGDPIRFLPCMHIYHLDCIDDWLMRSFTCPSCMEPVDAALLSSYETN</sequence>
<accession>Q9QYK7</accession>
<accession>B1AU36</accession>
<accession>B1AU37</accession>
<accession>Q9EQI1</accession>